<organism>
    <name type="scientific">Mus musculus</name>
    <name type="common">Mouse</name>
    <dbReference type="NCBI Taxonomy" id="10090"/>
    <lineage>
        <taxon>Eukaryota</taxon>
        <taxon>Metazoa</taxon>
        <taxon>Chordata</taxon>
        <taxon>Craniata</taxon>
        <taxon>Vertebrata</taxon>
        <taxon>Euteleostomi</taxon>
        <taxon>Mammalia</taxon>
        <taxon>Eutheria</taxon>
        <taxon>Euarchontoglires</taxon>
        <taxon>Glires</taxon>
        <taxon>Rodentia</taxon>
        <taxon>Myomorpha</taxon>
        <taxon>Muroidea</taxon>
        <taxon>Muridae</taxon>
        <taxon>Murinae</taxon>
        <taxon>Mus</taxon>
        <taxon>Mus</taxon>
    </lineage>
</organism>
<proteinExistence type="evidence at protein level"/>
<accession>Q8R1A4</accession>
<accession>Q45V78</accession>
<accession>Q5PRE6</accession>
<accession>Q6PJ17</accession>
<accession>Q9CSB6</accession>
<accession>Q9CXM7</accession>
<evidence type="ECO:0000250" key="1">
    <source>
        <dbReference type="UniProtKB" id="Q96N67"/>
    </source>
</evidence>
<evidence type="ECO:0000255" key="2"/>
<evidence type="ECO:0000255" key="3">
    <source>
        <dbReference type="PROSITE-ProRule" id="PRU00983"/>
    </source>
</evidence>
<evidence type="ECO:0000255" key="4">
    <source>
        <dbReference type="PROSITE-ProRule" id="PRU00984"/>
    </source>
</evidence>
<evidence type="ECO:0000256" key="5">
    <source>
        <dbReference type="SAM" id="MobiDB-lite"/>
    </source>
</evidence>
<evidence type="ECO:0000269" key="6">
    <source>
    </source>
</evidence>
<evidence type="ECO:0000269" key="7">
    <source>
    </source>
</evidence>
<evidence type="ECO:0000269" key="8">
    <source>
    </source>
</evidence>
<evidence type="ECO:0000303" key="9">
    <source>
    </source>
</evidence>
<evidence type="ECO:0000303" key="10">
    <source>
    </source>
</evidence>
<evidence type="ECO:0000305" key="11"/>
<evidence type="ECO:0007744" key="12">
    <source>
    </source>
</evidence>
<evidence type="ECO:0007744" key="13">
    <source>
    </source>
</evidence>
<evidence type="ECO:0007744" key="14">
    <source>
    </source>
</evidence>
<evidence type="ECO:0007744" key="15">
    <source>
    </source>
</evidence>
<keyword id="KW-0007">Acetylation</keyword>
<keyword id="KW-0025">Alternative splicing</keyword>
<keyword id="KW-0966">Cell projection</keyword>
<keyword id="KW-0175">Coiled coil</keyword>
<keyword id="KW-0217">Developmental protein</keyword>
<keyword id="KW-0221">Differentiation</keyword>
<keyword id="KW-0344">Guanine-nucleotide releasing factor</keyword>
<keyword id="KW-0488">Methylation</keyword>
<keyword id="KW-0524">Neurogenesis</keyword>
<keyword id="KW-0597">Phosphoprotein</keyword>
<keyword id="KW-1185">Reference proteome</keyword>
<name>DOCK7_MOUSE</name>
<feature type="chain" id="PRO_0000189996" description="Dedicator of cytokinesis protein 7">
    <location>
        <begin position="1"/>
        <end position="2130"/>
    </location>
</feature>
<feature type="domain" description="C2 DOCK-type" evidence="3">
    <location>
        <begin position="561"/>
        <end position="727"/>
    </location>
</feature>
<feature type="domain" description="DOCKER" evidence="4">
    <location>
        <begin position="1668"/>
        <end position="2104"/>
    </location>
</feature>
<feature type="region of interest" description="Disordered" evidence="5">
    <location>
        <begin position="137"/>
        <end position="175"/>
    </location>
</feature>
<feature type="region of interest" description="Disordered" evidence="5">
    <location>
        <begin position="888"/>
        <end position="966"/>
    </location>
</feature>
<feature type="coiled-coil region" evidence="2">
    <location>
        <begin position="365"/>
        <end position="395"/>
    </location>
</feature>
<feature type="coiled-coil region" evidence="2">
    <location>
        <begin position="2076"/>
        <end position="2102"/>
    </location>
</feature>
<feature type="compositionally biased region" description="Low complexity" evidence="5">
    <location>
        <begin position="888"/>
        <end position="901"/>
    </location>
</feature>
<feature type="compositionally biased region" description="Polar residues" evidence="5">
    <location>
        <begin position="942"/>
        <end position="966"/>
    </location>
</feature>
<feature type="modified residue" description="Phosphoserine" evidence="14">
    <location>
        <position position="30"/>
    </location>
</feature>
<feature type="modified residue" description="Phosphoserine" evidence="1">
    <location>
        <position position="180"/>
    </location>
</feature>
<feature type="modified residue" description="Phosphoserine" evidence="14">
    <location>
        <position position="182"/>
    </location>
</feature>
<feature type="modified residue" description="N6-methyllysine" evidence="1">
    <location>
        <position position="381"/>
    </location>
</feature>
<feature type="modified residue" description="Phosphothreonine" evidence="14">
    <location>
        <position position="450"/>
    </location>
</feature>
<feature type="modified residue" description="Phosphoserine" evidence="1">
    <location>
        <position position="452"/>
    </location>
</feature>
<feature type="modified residue" description="Phosphoserine" evidence="14">
    <location>
        <position position="862"/>
    </location>
</feature>
<feature type="modified residue" description="Phosphoserine" evidence="14">
    <location>
        <position position="864"/>
    </location>
</feature>
<feature type="modified residue" description="Phosphoserine" evidence="1">
    <location>
        <position position="882"/>
    </location>
</feature>
<feature type="modified residue" description="Phosphoserine" evidence="1">
    <location>
        <position position="888"/>
    </location>
</feature>
<feature type="modified residue" description="Phosphoserine" evidence="14">
    <location>
        <position position="896"/>
    </location>
</feature>
<feature type="modified residue" description="Phosphoserine" evidence="12 14">
    <location>
        <position position="900"/>
    </location>
</feature>
<feature type="modified residue" description="Phosphoserine" evidence="1">
    <location>
        <position position="905"/>
    </location>
</feature>
<feature type="modified residue" description="Phosphothreonine" evidence="14">
    <location>
        <position position="907"/>
    </location>
</feature>
<feature type="modified residue" description="Phosphothreonine" evidence="1">
    <location>
        <position position="909"/>
    </location>
</feature>
<feature type="modified residue" description="Phosphoserine" evidence="14">
    <location>
        <position position="910"/>
    </location>
</feature>
<feature type="modified residue" description="Phosphoserine" evidence="14">
    <location>
        <position position="929"/>
    </location>
</feature>
<feature type="modified residue" description="Phosphoserine" evidence="1">
    <location>
        <position position="963"/>
    </location>
</feature>
<feature type="modified residue" description="Phosphoserine" evidence="1">
    <location>
        <position position="1382"/>
    </location>
</feature>
<feature type="modified residue" description="Phosphoserine" evidence="14">
    <location>
        <position position="1420"/>
    </location>
</feature>
<feature type="modified residue" description="Phosphoserine" evidence="13 14">
    <location>
        <position position="1422"/>
    </location>
</feature>
<feature type="modified residue" description="Phosphoserine" evidence="14">
    <location>
        <position position="1424"/>
    </location>
</feature>
<feature type="modified residue" description="Phosphoserine" evidence="12 13 14">
    <location>
        <position position="1428"/>
    </location>
</feature>
<feature type="modified residue" description="N6-acetyllysine" evidence="15">
    <location>
        <position position="1952"/>
    </location>
</feature>
<feature type="modified residue" description="Phosphoserine" evidence="1">
    <location>
        <position position="2119"/>
    </location>
</feature>
<feature type="splice variant" id="VSP_007708" description="In isoform 2." evidence="9">
    <original>STGWE</original>
    <variation>DGK</variation>
    <location>
        <begin position="1822"/>
        <end position="1826"/>
    </location>
</feature>
<protein>
    <recommendedName>
        <fullName>Dedicator of cytokinesis protein 7</fullName>
    </recommendedName>
    <alternativeName>
        <fullName evidence="10">Protein moonlight</fullName>
    </alternativeName>
</protein>
<dbReference type="EMBL" id="AL627349">
    <property type="status" value="NOT_ANNOTATED_CDS"/>
    <property type="molecule type" value="Genomic_DNA"/>
</dbReference>
<dbReference type="EMBL" id="AL935325">
    <property type="status" value="NOT_ANNOTATED_CDS"/>
    <property type="molecule type" value="Genomic_DNA"/>
</dbReference>
<dbReference type="EMBL" id="DQ109674">
    <property type="protein sequence ID" value="AAZ17650.1"/>
    <property type="molecule type" value="mRNA"/>
</dbReference>
<dbReference type="EMBL" id="BC024823">
    <property type="protein sequence ID" value="AAH24823.2"/>
    <property type="status" value="ALT_INIT"/>
    <property type="molecule type" value="mRNA"/>
</dbReference>
<dbReference type="EMBL" id="BC024917">
    <property type="protein sequence ID" value="AAH24917.3"/>
    <property type="molecule type" value="mRNA"/>
</dbReference>
<dbReference type="EMBL" id="BC086672">
    <property type="protein sequence ID" value="AAH86672.1"/>
    <property type="status" value="ALT_INIT"/>
    <property type="molecule type" value="mRNA"/>
</dbReference>
<dbReference type="EMBL" id="AK122554">
    <property type="protein sequence ID" value="BAC65836.1"/>
    <property type="molecule type" value="mRNA"/>
</dbReference>
<dbReference type="EMBL" id="AK013336">
    <property type="protein sequence ID" value="BAB28798.3"/>
    <property type="status" value="ALT_INIT"/>
    <property type="molecule type" value="mRNA"/>
</dbReference>
<dbReference type="EMBL" id="AK014226">
    <property type="protein sequence ID" value="BAB29215.1"/>
    <property type="molecule type" value="mRNA"/>
</dbReference>
<dbReference type="CCDS" id="CCDS71425.1">
    <molecule id="Q8R1A4-2"/>
</dbReference>
<dbReference type="CCDS" id="CCDS89783.1">
    <molecule id="Q8R1A4-1"/>
</dbReference>
<dbReference type="SMR" id="Q8R1A4"/>
<dbReference type="FunCoup" id="Q8R1A4">
    <property type="interactions" value="2357"/>
</dbReference>
<dbReference type="IntAct" id="Q8R1A4">
    <property type="interactions" value="9"/>
</dbReference>
<dbReference type="STRING" id="10090.ENSMUSP00000030286"/>
<dbReference type="GlyGen" id="Q8R1A4">
    <property type="glycosylation" value="2 sites, 1 O-linked glycan (2 sites)"/>
</dbReference>
<dbReference type="iPTMnet" id="Q8R1A4"/>
<dbReference type="PhosphoSitePlus" id="Q8R1A4"/>
<dbReference type="jPOST" id="Q8R1A4"/>
<dbReference type="PaxDb" id="10090-ENSMUSP00000030286"/>
<dbReference type="PeptideAtlas" id="Q8R1A4"/>
<dbReference type="ProteomicsDB" id="279758">
    <molecule id="Q8R1A4-1"/>
</dbReference>
<dbReference type="ProteomicsDB" id="279759">
    <molecule id="Q8R1A4-2"/>
</dbReference>
<dbReference type="Pumba" id="Q8R1A4"/>
<dbReference type="UCSC" id="uc008tup.2">
    <molecule id="Q8R1A4-1"/>
    <property type="organism name" value="mouse"/>
</dbReference>
<dbReference type="AGR" id="MGI:1914549"/>
<dbReference type="MGI" id="MGI:1914549">
    <property type="gene designation" value="Dock7"/>
</dbReference>
<dbReference type="eggNOG" id="KOG1997">
    <property type="taxonomic scope" value="Eukaryota"/>
</dbReference>
<dbReference type="InParanoid" id="Q8R1A4"/>
<dbReference type="PhylomeDB" id="Q8R1A4"/>
<dbReference type="Reactome" id="R-MMU-8875555">
    <property type="pathway name" value="MET activates RAP1 and RAC1"/>
</dbReference>
<dbReference type="Reactome" id="R-MMU-9013148">
    <property type="pathway name" value="CDC42 GTPase cycle"/>
</dbReference>
<dbReference type="Reactome" id="R-MMU-9013149">
    <property type="pathway name" value="RAC1 GTPase cycle"/>
</dbReference>
<dbReference type="Reactome" id="R-MMU-983231">
    <property type="pathway name" value="Factors involved in megakaryocyte development and platelet production"/>
</dbReference>
<dbReference type="CD-CODE" id="CE726F99">
    <property type="entry name" value="Postsynaptic density"/>
</dbReference>
<dbReference type="ChiTaRS" id="Dock7">
    <property type="organism name" value="mouse"/>
</dbReference>
<dbReference type="PRO" id="PR:Q8R1A4"/>
<dbReference type="Proteomes" id="UP000000589">
    <property type="component" value="Unplaced"/>
</dbReference>
<dbReference type="RNAct" id="Q8R1A4">
    <property type="molecule type" value="protein"/>
</dbReference>
<dbReference type="GO" id="GO:0030424">
    <property type="term" value="C:axon"/>
    <property type="evidence" value="ECO:0007669"/>
    <property type="project" value="UniProtKB-SubCell"/>
</dbReference>
<dbReference type="GO" id="GO:0031594">
    <property type="term" value="C:neuromuscular junction"/>
    <property type="evidence" value="ECO:0000314"/>
    <property type="project" value="SynGO"/>
</dbReference>
<dbReference type="GO" id="GO:0005085">
    <property type="term" value="F:guanyl-nucleotide exchange factor activity"/>
    <property type="evidence" value="ECO:0007669"/>
    <property type="project" value="UniProtKB-KW"/>
</dbReference>
<dbReference type="GO" id="GO:0031267">
    <property type="term" value="F:small GTPase binding"/>
    <property type="evidence" value="ECO:0000314"/>
    <property type="project" value="BHF-UCL"/>
</dbReference>
<dbReference type="GO" id="GO:0002244">
    <property type="term" value="P:hematopoietic progenitor cell differentiation"/>
    <property type="evidence" value="ECO:0000316"/>
    <property type="project" value="MGI"/>
</dbReference>
<dbReference type="GO" id="GO:0022027">
    <property type="term" value="P:interkinetic nuclear migration"/>
    <property type="evidence" value="ECO:0000315"/>
    <property type="project" value="UniProtKB"/>
</dbReference>
<dbReference type="GO" id="GO:0120163">
    <property type="term" value="P:negative regulation of cold-induced thermogenesis"/>
    <property type="evidence" value="ECO:0000315"/>
    <property type="project" value="YuBioLab"/>
</dbReference>
<dbReference type="GO" id="GO:0043473">
    <property type="term" value="P:pigmentation"/>
    <property type="evidence" value="ECO:0000315"/>
    <property type="project" value="MGI"/>
</dbReference>
<dbReference type="GO" id="GO:0098698">
    <property type="term" value="P:postsynaptic specialization assembly"/>
    <property type="evidence" value="ECO:0000314"/>
    <property type="project" value="SynGO"/>
</dbReference>
<dbReference type="GO" id="GO:0050767">
    <property type="term" value="P:regulation of neurogenesis"/>
    <property type="evidence" value="ECO:0000315"/>
    <property type="project" value="UniProtKB"/>
</dbReference>
<dbReference type="GO" id="GO:0007264">
    <property type="term" value="P:small GTPase-mediated signal transduction"/>
    <property type="evidence" value="ECO:0007669"/>
    <property type="project" value="InterPro"/>
</dbReference>
<dbReference type="CDD" id="cd08696">
    <property type="entry name" value="C2_Dock-C"/>
    <property type="match status" value="1"/>
</dbReference>
<dbReference type="CDD" id="cd11703">
    <property type="entry name" value="DHR2_DOCK7"/>
    <property type="match status" value="1"/>
</dbReference>
<dbReference type="FunFam" id="1.20.58.740:FF:000002">
    <property type="entry name" value="Dedicator of cytokinesis protein 7"/>
    <property type="match status" value="1"/>
</dbReference>
<dbReference type="FunFam" id="1.25.40.410:FF:000002">
    <property type="entry name" value="Dedicator of cytokinesis protein 7"/>
    <property type="match status" value="1"/>
</dbReference>
<dbReference type="FunFam" id="2.60.40.150:FF:000022">
    <property type="entry name" value="Dedicator of cytokinesis protein 7"/>
    <property type="match status" value="1"/>
</dbReference>
<dbReference type="Gene3D" id="1.20.58.740">
    <property type="match status" value="1"/>
</dbReference>
<dbReference type="Gene3D" id="1.25.40.410">
    <property type="match status" value="1"/>
</dbReference>
<dbReference type="Gene3D" id="2.60.40.150">
    <property type="entry name" value="C2 domain"/>
    <property type="match status" value="1"/>
</dbReference>
<dbReference type="InterPro" id="IPR037808">
    <property type="entry name" value="C2_Dock-C"/>
</dbReference>
<dbReference type="InterPro" id="IPR027007">
    <property type="entry name" value="C2_DOCK-type_domain"/>
</dbReference>
<dbReference type="InterPro" id="IPR035892">
    <property type="entry name" value="C2_domain_sf"/>
</dbReference>
<dbReference type="InterPro" id="IPR026791">
    <property type="entry name" value="DOCK"/>
</dbReference>
<dbReference type="InterPro" id="IPR021816">
    <property type="entry name" value="DOCK_C/D_N"/>
</dbReference>
<dbReference type="InterPro" id="IPR043161">
    <property type="entry name" value="DOCK_C_lobe_A"/>
</dbReference>
<dbReference type="InterPro" id="IPR043162">
    <property type="entry name" value="DOCK_C_lobe_C"/>
</dbReference>
<dbReference type="InterPro" id="IPR027357">
    <property type="entry name" value="DOCKER_dom"/>
</dbReference>
<dbReference type="InterPro" id="IPR046769">
    <property type="entry name" value="DOCKER_Lobe_A"/>
</dbReference>
<dbReference type="InterPro" id="IPR046770">
    <property type="entry name" value="DOCKER_Lobe_B"/>
</dbReference>
<dbReference type="InterPro" id="IPR046773">
    <property type="entry name" value="DOCKER_Lobe_C"/>
</dbReference>
<dbReference type="PANTHER" id="PTHR23317">
    <property type="entry name" value="DEDICATOR OF CYTOKINESIS DOCK"/>
    <property type="match status" value="1"/>
</dbReference>
<dbReference type="PANTHER" id="PTHR23317:SF78">
    <property type="entry name" value="DEDICATOR OF CYTOKINESIS PROTEIN 7"/>
    <property type="match status" value="1"/>
</dbReference>
<dbReference type="Pfam" id="PF06920">
    <property type="entry name" value="DHR-2_Lobe_A"/>
    <property type="match status" value="1"/>
</dbReference>
<dbReference type="Pfam" id="PF20422">
    <property type="entry name" value="DHR-2_Lobe_B"/>
    <property type="match status" value="1"/>
</dbReference>
<dbReference type="Pfam" id="PF20421">
    <property type="entry name" value="DHR-2_Lobe_C"/>
    <property type="match status" value="1"/>
</dbReference>
<dbReference type="Pfam" id="PF14429">
    <property type="entry name" value="DOCK-C2"/>
    <property type="match status" value="1"/>
</dbReference>
<dbReference type="Pfam" id="PF11878">
    <property type="entry name" value="DOCK_C-D_N"/>
    <property type="match status" value="1"/>
</dbReference>
<dbReference type="PROSITE" id="PS51650">
    <property type="entry name" value="C2_DOCK"/>
    <property type="match status" value="1"/>
</dbReference>
<dbReference type="PROSITE" id="PS51651">
    <property type="entry name" value="DOCKER"/>
    <property type="match status" value="1"/>
</dbReference>
<reference key="1">
    <citation type="journal article" date="2009" name="PLoS Biol.">
        <title>Lineage-specific biology revealed by a finished genome assembly of the mouse.</title>
        <authorList>
            <person name="Church D.M."/>
            <person name="Goodstadt L."/>
            <person name="Hillier L.W."/>
            <person name="Zody M.C."/>
            <person name="Goldstein S."/>
            <person name="She X."/>
            <person name="Bult C.J."/>
            <person name="Agarwala R."/>
            <person name="Cherry J.L."/>
            <person name="DiCuccio M."/>
            <person name="Hlavina W."/>
            <person name="Kapustin Y."/>
            <person name="Meric P."/>
            <person name="Maglott D."/>
            <person name="Birtle Z."/>
            <person name="Marques A.C."/>
            <person name="Graves T."/>
            <person name="Zhou S."/>
            <person name="Teague B."/>
            <person name="Potamousis K."/>
            <person name="Churas C."/>
            <person name="Place M."/>
            <person name="Herschleb J."/>
            <person name="Runnheim R."/>
            <person name="Forrest D."/>
            <person name="Amos-Landgraf J."/>
            <person name="Schwartz D.C."/>
            <person name="Cheng Z."/>
            <person name="Lindblad-Toh K."/>
            <person name="Eichler E.E."/>
            <person name="Ponting C.P."/>
        </authorList>
    </citation>
    <scope>NUCLEOTIDE SEQUENCE [LARGE SCALE GENOMIC DNA]</scope>
    <source>
        <strain>C57BL/6J</strain>
    </source>
</reference>
<reference key="2">
    <citation type="submission" date="2005-06" db="EMBL/GenBank/DDBJ databases">
        <title>Characterization of a novel GEF Dock7.</title>
        <authorList>
            <person name="Yamauchi J."/>
            <person name="Miyamoto Y."/>
            <person name="Takashima S."/>
            <person name="Tanoue A."/>
        </authorList>
    </citation>
    <scope>NUCLEOTIDE SEQUENCE [MRNA] OF 109-587</scope>
    <source>
        <strain>BALB/cJ</strain>
    </source>
</reference>
<reference key="3">
    <citation type="journal article" date="2004" name="Genome Res.">
        <title>The status, quality, and expansion of the NIH full-length cDNA project: the Mammalian Gene Collection (MGC).</title>
        <authorList>
            <consortium name="The MGC Project Team"/>
        </authorList>
    </citation>
    <scope>NUCLEOTIDE SEQUENCE [LARGE SCALE MRNA] OF 811-2130 (ISOFORM 2)</scope>
    <source>
        <strain>C57BL/6J</strain>
        <strain>FVB/N</strain>
        <strain>NMRI</strain>
        <tissue>Head</tissue>
        <tissue>Mammary gland</tissue>
    </source>
</reference>
<reference key="4">
    <citation type="journal article" date="2003" name="DNA Res.">
        <title>Prediction of the coding sequences of mouse homologues of KIAA gene: II. The complete nucleotide sequences of 400 mouse KIAA-homologous cDNAs identified by screening of terminal sequences of cDNA clones randomly sampled from size-fractionated libraries.</title>
        <authorList>
            <person name="Okazaki N."/>
            <person name="Kikuno R."/>
            <person name="Ohara R."/>
            <person name="Inamoto S."/>
            <person name="Aizawa H."/>
            <person name="Yuasa S."/>
            <person name="Nakajima D."/>
            <person name="Nagase T."/>
            <person name="Ohara O."/>
            <person name="Koga H."/>
        </authorList>
    </citation>
    <scope>NUCLEOTIDE SEQUENCE [LARGE SCALE MRNA] OF 1404-2130 (ISOFORM 1)</scope>
    <source>
        <tissue>Brain</tissue>
    </source>
</reference>
<reference key="5">
    <citation type="journal article" date="2005" name="Science">
        <title>The transcriptional landscape of the mammalian genome.</title>
        <authorList>
            <person name="Carninci P."/>
            <person name="Kasukawa T."/>
            <person name="Katayama S."/>
            <person name="Gough J."/>
            <person name="Frith M.C."/>
            <person name="Maeda N."/>
            <person name="Oyama R."/>
            <person name="Ravasi T."/>
            <person name="Lenhard B."/>
            <person name="Wells C."/>
            <person name="Kodzius R."/>
            <person name="Shimokawa K."/>
            <person name="Bajic V.B."/>
            <person name="Brenner S.E."/>
            <person name="Batalov S."/>
            <person name="Forrest A.R."/>
            <person name="Zavolan M."/>
            <person name="Davis M.J."/>
            <person name="Wilming L.G."/>
            <person name="Aidinis V."/>
            <person name="Allen J.E."/>
            <person name="Ambesi-Impiombato A."/>
            <person name="Apweiler R."/>
            <person name="Aturaliya R.N."/>
            <person name="Bailey T.L."/>
            <person name="Bansal M."/>
            <person name="Baxter L."/>
            <person name="Beisel K.W."/>
            <person name="Bersano T."/>
            <person name="Bono H."/>
            <person name="Chalk A.M."/>
            <person name="Chiu K.P."/>
            <person name="Choudhary V."/>
            <person name="Christoffels A."/>
            <person name="Clutterbuck D.R."/>
            <person name="Crowe M.L."/>
            <person name="Dalla E."/>
            <person name="Dalrymple B.P."/>
            <person name="de Bono B."/>
            <person name="Della Gatta G."/>
            <person name="di Bernardo D."/>
            <person name="Down T."/>
            <person name="Engstrom P."/>
            <person name="Fagiolini M."/>
            <person name="Faulkner G."/>
            <person name="Fletcher C.F."/>
            <person name="Fukushima T."/>
            <person name="Furuno M."/>
            <person name="Futaki S."/>
            <person name="Gariboldi M."/>
            <person name="Georgii-Hemming P."/>
            <person name="Gingeras T.R."/>
            <person name="Gojobori T."/>
            <person name="Green R.E."/>
            <person name="Gustincich S."/>
            <person name="Harbers M."/>
            <person name="Hayashi Y."/>
            <person name="Hensch T.K."/>
            <person name="Hirokawa N."/>
            <person name="Hill D."/>
            <person name="Huminiecki L."/>
            <person name="Iacono M."/>
            <person name="Ikeo K."/>
            <person name="Iwama A."/>
            <person name="Ishikawa T."/>
            <person name="Jakt M."/>
            <person name="Kanapin A."/>
            <person name="Katoh M."/>
            <person name="Kawasawa Y."/>
            <person name="Kelso J."/>
            <person name="Kitamura H."/>
            <person name="Kitano H."/>
            <person name="Kollias G."/>
            <person name="Krishnan S.P."/>
            <person name="Kruger A."/>
            <person name="Kummerfeld S.K."/>
            <person name="Kurochkin I.V."/>
            <person name="Lareau L.F."/>
            <person name="Lazarevic D."/>
            <person name="Lipovich L."/>
            <person name="Liu J."/>
            <person name="Liuni S."/>
            <person name="McWilliam S."/>
            <person name="Madan Babu M."/>
            <person name="Madera M."/>
            <person name="Marchionni L."/>
            <person name="Matsuda H."/>
            <person name="Matsuzawa S."/>
            <person name="Miki H."/>
            <person name="Mignone F."/>
            <person name="Miyake S."/>
            <person name="Morris K."/>
            <person name="Mottagui-Tabar S."/>
            <person name="Mulder N."/>
            <person name="Nakano N."/>
            <person name="Nakauchi H."/>
            <person name="Ng P."/>
            <person name="Nilsson R."/>
            <person name="Nishiguchi S."/>
            <person name="Nishikawa S."/>
            <person name="Nori F."/>
            <person name="Ohara O."/>
            <person name="Okazaki Y."/>
            <person name="Orlando V."/>
            <person name="Pang K.C."/>
            <person name="Pavan W.J."/>
            <person name="Pavesi G."/>
            <person name="Pesole G."/>
            <person name="Petrovsky N."/>
            <person name="Piazza S."/>
            <person name="Reed J."/>
            <person name="Reid J.F."/>
            <person name="Ring B.Z."/>
            <person name="Ringwald M."/>
            <person name="Rost B."/>
            <person name="Ruan Y."/>
            <person name="Salzberg S.L."/>
            <person name="Sandelin A."/>
            <person name="Schneider C."/>
            <person name="Schoenbach C."/>
            <person name="Sekiguchi K."/>
            <person name="Semple C.A."/>
            <person name="Seno S."/>
            <person name="Sessa L."/>
            <person name="Sheng Y."/>
            <person name="Shibata Y."/>
            <person name="Shimada H."/>
            <person name="Shimada K."/>
            <person name="Silva D."/>
            <person name="Sinclair B."/>
            <person name="Sperling S."/>
            <person name="Stupka E."/>
            <person name="Sugiura K."/>
            <person name="Sultana R."/>
            <person name="Takenaka Y."/>
            <person name="Taki K."/>
            <person name="Tammoja K."/>
            <person name="Tan S.L."/>
            <person name="Tang S."/>
            <person name="Taylor M.S."/>
            <person name="Tegner J."/>
            <person name="Teichmann S.A."/>
            <person name="Ueda H.R."/>
            <person name="van Nimwegen E."/>
            <person name="Verardo R."/>
            <person name="Wei C.L."/>
            <person name="Yagi K."/>
            <person name="Yamanishi H."/>
            <person name="Zabarovsky E."/>
            <person name="Zhu S."/>
            <person name="Zimmer A."/>
            <person name="Hide W."/>
            <person name="Bult C."/>
            <person name="Grimmond S.M."/>
            <person name="Teasdale R.D."/>
            <person name="Liu E.T."/>
            <person name="Brusic V."/>
            <person name="Quackenbush J."/>
            <person name="Wahlestedt C."/>
            <person name="Mattick J.S."/>
            <person name="Hume D.A."/>
            <person name="Kai C."/>
            <person name="Sasaki D."/>
            <person name="Tomaru Y."/>
            <person name="Fukuda S."/>
            <person name="Kanamori-Katayama M."/>
            <person name="Suzuki M."/>
            <person name="Aoki J."/>
            <person name="Arakawa T."/>
            <person name="Iida J."/>
            <person name="Imamura K."/>
            <person name="Itoh M."/>
            <person name="Kato T."/>
            <person name="Kawaji H."/>
            <person name="Kawagashira N."/>
            <person name="Kawashima T."/>
            <person name="Kojima M."/>
            <person name="Kondo S."/>
            <person name="Konno H."/>
            <person name="Nakano K."/>
            <person name="Ninomiya N."/>
            <person name="Nishio T."/>
            <person name="Okada M."/>
            <person name="Plessy C."/>
            <person name="Shibata K."/>
            <person name="Shiraki T."/>
            <person name="Suzuki S."/>
            <person name="Tagami M."/>
            <person name="Waki K."/>
            <person name="Watahiki A."/>
            <person name="Okamura-Oho Y."/>
            <person name="Suzuki H."/>
            <person name="Kawai J."/>
            <person name="Hayashizaki Y."/>
        </authorList>
    </citation>
    <scope>NUCLEOTIDE SEQUENCE [LARGE SCALE MRNA] OF 1856-2130 (ISOFORM 1)</scope>
    <source>
        <strain>C57BL/6J</strain>
        <tissue>Embryo</tissue>
        <tissue>Embryonic head</tissue>
    </source>
</reference>
<reference key="6">
    <citation type="journal article" date="2007" name="Proc. Natl. Acad. Sci. U.S.A.">
        <title>Large-scale phosphorylation analysis of mouse liver.</title>
        <authorList>
            <person name="Villen J."/>
            <person name="Beausoleil S.A."/>
            <person name="Gerber S.A."/>
            <person name="Gygi S.P."/>
        </authorList>
    </citation>
    <scope>PHOSPHORYLATION [LARGE SCALE ANALYSIS] AT SER-900 AND SER-1428</scope>
    <scope>IDENTIFICATION BY MASS SPECTROMETRY [LARGE SCALE ANALYSIS]</scope>
    <source>
        <tissue>Liver</tissue>
    </source>
</reference>
<reference key="7">
    <citation type="journal article" date="2009" name="Immunity">
        <title>The phagosomal proteome in interferon-gamma-activated macrophages.</title>
        <authorList>
            <person name="Trost M."/>
            <person name="English L."/>
            <person name="Lemieux S."/>
            <person name="Courcelles M."/>
            <person name="Desjardins M."/>
            <person name="Thibault P."/>
        </authorList>
    </citation>
    <scope>IDENTIFICATION BY MASS SPECTROMETRY [LARGE SCALE ANALYSIS]</scope>
</reference>
<reference key="8">
    <citation type="journal article" date="2009" name="Mol. Cell. Proteomics">
        <title>Large scale localization of protein phosphorylation by use of electron capture dissociation mass spectrometry.</title>
        <authorList>
            <person name="Sweet S.M."/>
            <person name="Bailey C.M."/>
            <person name="Cunningham D.L."/>
            <person name="Heath J.K."/>
            <person name="Cooper H.J."/>
        </authorList>
    </citation>
    <scope>PHOSPHORYLATION [LARGE SCALE ANALYSIS] AT SER-1422 AND SER-1428</scope>
    <scope>IDENTIFICATION BY MASS SPECTROMETRY [LARGE SCALE ANALYSIS]</scope>
    <source>
        <tissue>Embryonic fibroblast</tissue>
    </source>
</reference>
<reference key="9">
    <citation type="journal article" date="2009" name="Nucleic Acids Res.">
        <title>Molecular characterization of Mybbp1a as a co-repressor on the Period2 promoter.</title>
        <authorList>
            <person name="Hara Y."/>
            <person name="Onishi Y."/>
            <person name="Oishi K."/>
            <person name="Miyazaki K."/>
            <person name="Fukamizu A."/>
            <person name="Ishida N."/>
        </authorList>
    </citation>
    <scope>INTERACTION WITH CRY1</scope>
</reference>
<reference key="10">
    <citation type="journal article" date="2009" name="Proc. Natl. Acad. Sci. U.S.A.">
        <title>Mice with mutations of Dock7 have generalized hypopigmentation and white-spotting but show normal neurological function.</title>
        <authorList>
            <person name="Blasius A.L."/>
            <person name="Brandl K."/>
            <person name="Crozat K."/>
            <person name="Xia Y."/>
            <person name="Khovananth K."/>
            <person name="Krebs P."/>
            <person name="Smart N.G."/>
            <person name="Zampolli A."/>
            <person name="Ruggeri Z.M."/>
            <person name="Beutler B.A."/>
        </authorList>
    </citation>
    <scope>FUNCTION</scope>
    <scope>INVOLVEMENT IN MNLT PHENOTYPE</scope>
</reference>
<reference key="11">
    <citation type="journal article" date="2010" name="Cell">
        <title>A tissue-specific atlas of mouse protein phosphorylation and expression.</title>
        <authorList>
            <person name="Huttlin E.L."/>
            <person name="Jedrychowski M.P."/>
            <person name="Elias J.E."/>
            <person name="Goswami T."/>
            <person name="Rad R."/>
            <person name="Beausoleil S.A."/>
            <person name="Villen J."/>
            <person name="Haas W."/>
            <person name="Sowa M.E."/>
            <person name="Gygi S.P."/>
        </authorList>
    </citation>
    <scope>PHOSPHORYLATION [LARGE SCALE ANALYSIS] AT SER-30; SER-182; THR-450; SER-862; SER-864; SER-896; SER-900; THR-907; SER-910; SER-929; SER-1420; SER-1422; SER-1424 AND SER-1428</scope>
    <scope>IDENTIFICATION BY MASS SPECTROMETRY [LARGE SCALE ANALYSIS]</scope>
    <source>
        <tissue>Brain</tissue>
        <tissue>Brown adipose tissue</tissue>
        <tissue>Heart</tissue>
        <tissue>Kidney</tissue>
        <tissue>Liver</tissue>
        <tissue>Lung</tissue>
        <tissue>Pancreas</tissue>
        <tissue>Spleen</tissue>
        <tissue>Testis</tissue>
    </source>
</reference>
<reference key="12">
    <citation type="journal article" date="2012" name="Nat. Neurosci.">
        <title>DOCK7 interacts with TACC3 to regulate interkinetic nuclear migration and cortical neurogenesis.</title>
        <authorList>
            <person name="Yang Y.T."/>
            <person name="Wang C.L."/>
            <person name="Van Aelst L."/>
        </authorList>
    </citation>
    <scope>FUNCTION</scope>
    <scope>INTERACTION WITH TACC3</scope>
</reference>
<reference key="13">
    <citation type="journal article" date="2013" name="Mol. Cell">
        <title>SIRT5-mediated lysine desuccinylation impacts diverse metabolic pathways.</title>
        <authorList>
            <person name="Park J."/>
            <person name="Chen Y."/>
            <person name="Tishkoff D.X."/>
            <person name="Peng C."/>
            <person name="Tan M."/>
            <person name="Dai L."/>
            <person name="Xie Z."/>
            <person name="Zhang Y."/>
            <person name="Zwaans B.M."/>
            <person name="Skinner M.E."/>
            <person name="Lombard D.B."/>
            <person name="Zhao Y."/>
        </authorList>
    </citation>
    <scope>ACETYLATION [LARGE SCALE ANALYSIS] AT LYS-1952</scope>
    <scope>IDENTIFICATION BY MASS SPECTROMETRY [LARGE SCALE ANALYSIS]</scope>
    <source>
        <tissue>Embryonic fibroblast</tissue>
    </source>
</reference>
<comment type="function">
    <text evidence="1 7 8">Functions as a guanine nucleotide exchange factor (GEF), which activates Rac1 and Rac3 Rho small GTPases by exchanging bound GDP for free GTP. Does not have a GEF activity for CDC42. Required for STMN1 'Ser-15' phosphorylation during axon formation and consequently for neuronal polarization (By similarity). As part of the DISP complex, may regulate the association of septins with actin and thereby regulate the actin cytoskeleton (By similarity). Has a role in pigmentation (PubMed:19202056). Involved in the regulation of cortical neurogenesis through the control of radial glial cells (RGCs) proliferation versus differentiation; negatively regulates the basal-to-apical interkinetic nuclear migration of RGCs by antagonizing the microtubule growth-promoting function of TACC3 (PubMed:22842144).</text>
</comment>
<comment type="subunit">
    <text evidence="1 6 8">Component of the DOCK7-induced septin displacement/DISP complex, at least composed of DOCK7, LRCH3 and MYO6 (By similarity). Interacts with TSC1 (By similarity). Interacts with nucleotide-free RAC1 and RAC3 (By similarity). Interacts with TACC3. Interacts with CRY1. Interacts with NOD2 (By similarity).</text>
</comment>
<comment type="subcellular location">
    <subcellularLocation>
        <location evidence="1">Cell projection</location>
        <location evidence="1">Axon</location>
    </subcellularLocation>
    <text evidence="1">Enriched in the developing axons of hippocampal neurons.</text>
</comment>
<comment type="alternative products">
    <event type="alternative splicing"/>
    <isoform>
        <id>Q8R1A4-1</id>
        <name>1</name>
        <sequence type="displayed"/>
    </isoform>
    <isoform>
        <id>Q8R1A4-2</id>
        <name>2</name>
        <sequence type="described" ref="VSP_007708"/>
    </isoform>
</comment>
<comment type="domain">
    <text evidence="1">The DOCKER domain mediates GEF activity.</text>
</comment>
<comment type="disease">
    <text evidence="7">Defects in Dock7 are responsible for the moonlight phenotype (mnlt). mnlt/mnlt mice display an overall lightened coat color and hypopigmentation of the belly and distal extremities, particularly the paws, tail tip, and genitalia.</text>
</comment>
<comment type="similarity">
    <text evidence="3">Belongs to the DOCK family.</text>
</comment>
<comment type="sequence caution" evidence="11">
    <conflict type="erroneous initiation">
        <sequence resource="EMBL-CDS" id="AAH24823"/>
    </conflict>
    <text>Extended N-terminus.</text>
</comment>
<comment type="sequence caution" evidence="11">
    <conflict type="erroneous initiation">
        <sequence resource="EMBL-CDS" id="AAH86672"/>
    </conflict>
    <text>Truncated N-terminus.</text>
</comment>
<comment type="sequence caution" evidence="11">
    <conflict type="erroneous initiation">
        <sequence resource="EMBL-CDS" id="BAB28798"/>
    </conflict>
    <text>Truncated N-terminus.</text>
</comment>
<gene>
    <name type="primary">Dock7</name>
    <name type="synonym">Gm430</name>
    <name type="synonym">Kiaa1771</name>
    <name evidence="10" type="synonym">Mnlt</name>
</gene>
<sequence length="2130" mass="241438">MAERRAFAQKISRTVAAEVRKQISGQYSGSPQLLKNLNIVGNISHHTTVPLTEAVDPVDLEDYLVTHPLSGDSGPLRDLVEFPPDDIEVVYSPRDCRTLVSAVPEESEMDPHVRDCIRSYTEDWAVVVRKYHKLGTGFNPNTLDKQKERQKGLPRQVFESDEAPDGSSYQDEQDDLKRRSMSIDDTPRGSWACSIFDLKNSLPDALLPNLLDRTPNEEIDHQNDDQRKSNRHKELFALHPSPDEEEPIERLSVPDVPKEHFGQRLLVKCLSLKFEIEIEPIFASLALYDVKEKKKISENFYFDLNSEQMKGLLRPHVPPAAITTLARSAIFSITYPSQDVFLVIKLEKVLQQGDIGECAEPYMIFKEADATKNKEKLEKLKSQADQFCQRLGKYRMPFAWTAIHLMNIVSSAGSLERDSTEVEISTGERKGSWSERRNSSLVGRRSLERTTSGDDACNLTSFRPATLTVANFFKQEGDRLSDEDLYKFLADMRRPSSVLRRLRPITAQLKIDISPAPENPHYCLTPELLQVKLYPDSRVRPTREILEFPARDVYVPNTTYRNLLYIYPQSLNFANRQGSARNITVKVQFMYGEDPSNAMPVIFGKSSCSEFSKEAYTAVVYHNRSPDFHEEIKVKLPATLTDHHHLLFTFYHVSCQQKQNTPLETPVGYTWIPMLQNGRLKTGQFCLPVSLEKPPQAYSVLSPEVPLPGMKWVDNHKGVFNVEVVAVSSIHTQDPYLDKFFALVNALDEHMFPVRIGDMRIMENNLESELKSSISALNSSQLEPVVRFLHLLLDKLILLVVRPPVIAGQIVNLGQASFEAMASIINRLHKNLEGNHDQHGRNNLLASYIYYVFRLPNTYPNSPSPGPGGLGGSVHYATMARSAVRPASLNLNRSRSLSNSNPDISGTPTSPDDEVRSIIGSKGLDRSNSWVNTGPKAAPWGSNPSPSAESTQAMDRSCNRMSSHTETSSFLQTLTGRLPTKKLFHEELALQWVVCSGSVRESALQQAWFFFELMVKSMVHHLYFNDKLDAPRESRFPERFMDDIAALVSTIAGDVVSRFQKDTEMVERLNTSLAFFLNDLLSVMDRGFVFSLIKSCYKQVSAKLYSLPNPSVLVSLRLDFLRIICSHEHYVTLNLPCSLLTPPASPSPSVSSATSQSSGFSTSVQDQKIANMFELSLPFRQQHYLAGLVLTELALILDPDAEGLFGLHKKVINMVHNLLSTHDSDPRYSDPQIKARVAMLYLPLIGIIMETVPQLYDFTESHNQRGRPICIAPDDYDSESGSMISQTVAMAIAGTSVPQLTRPGSFLLTSTSGRQHTTFSAESSRSLLICLLWVLKNADETVLQKWFTDLSVLQLNRLLDLLYLCVSCFEYKGKKVFERMNSLTFKKSKDMRAKLEEAILGSIGARQEMVRRSRGQLERSPSGSAFGSQENLRWRKDMTHWRQNSEKLDKSRAEIEHEALIDGNLATEANLIILDTLEIIVQTVSVTESKESILGGVLKVLLQSMACNQSAVYLQHCFATQRALVSKFPELLFEEETEQCADLCLRLLRHCSSSISTIRSHASASLYLLMRQNFEIGNNFARVKMQVTMSLSSLVGTSQNFNEEFLRRSLKTILTYAEEDLELRETTFPDQVQDLVFNLHMILSDTVKMKEHQEDPEMLIDLMYRIAKGYQTSPDLRLTWLQNMAGKHSERSNHAEAAQCLVHSAALVAEYLSMLEDRKYLPVGCVTFQNISSNVLEESAVSDDVVSPDEEGICSGKYFTESGLVGLLEQAAASFSMAGMYEAVNEVYKVLIPIHEANRDAKKLSTIHGKLQEAFSKIVHQSTGWERMFGTYFRVGFYGTKFGDLDEQEFVYKEPAITKLAEISHRLEGFYGERFGEDVLEVIKDSNPVDKCKLDPNKAYIQITYVEPFFDTYEMKDRITYFDKNYNLRRFMYCTPFTLDGRAHGELHEQFKRKTILTTSHAFPYIKTRVNVTHKEEIILTPIEVAIEDMQKKTQELAFATHQDPADPKMLQMVLQGSVGTTVNQGPLEVAQVFLSEIPGDPKLFRHHNKLRLCFKDFTKRCEDALRKNKSLIGPDQKEYQRELERNYHRLKEALQPLINRKIPQLYKAVLPVTCHRDSFSRMSLRKMEL</sequence>